<evidence type="ECO:0000255" key="1">
    <source>
        <dbReference type="HAMAP-Rule" id="MF_01831"/>
    </source>
</evidence>
<proteinExistence type="inferred from homology"/>
<accession>B7N516</accession>
<organism>
    <name type="scientific">Escherichia coli O17:K52:H18 (strain UMN026 / ExPEC)</name>
    <dbReference type="NCBI Taxonomy" id="585056"/>
    <lineage>
        <taxon>Bacteria</taxon>
        <taxon>Pseudomonadati</taxon>
        <taxon>Pseudomonadota</taxon>
        <taxon>Gammaproteobacteria</taxon>
        <taxon>Enterobacterales</taxon>
        <taxon>Enterobacteriaceae</taxon>
        <taxon>Escherichia</taxon>
    </lineage>
</organism>
<name>SUFS_ECOLU</name>
<comment type="function">
    <text evidence="1">Cysteine desulfurases mobilize the sulfur from L-cysteine to yield L-alanine, an essential step in sulfur metabolism for biosynthesis of a variety of sulfur-containing biomolecules. Component of the suf operon, which is activated and required under specific conditions such as oxidative stress and iron limitation. Acts as a potent selenocysteine lyase in vitro, that mobilizes selenium from L-selenocysteine. Selenocysteine lyase activity is however unsure in vivo.</text>
</comment>
<comment type="catalytic activity">
    <reaction evidence="1">
        <text>(sulfur carrier)-H + L-cysteine = (sulfur carrier)-SH + L-alanine</text>
        <dbReference type="Rhea" id="RHEA:43892"/>
        <dbReference type="Rhea" id="RHEA-COMP:14737"/>
        <dbReference type="Rhea" id="RHEA-COMP:14739"/>
        <dbReference type="ChEBI" id="CHEBI:29917"/>
        <dbReference type="ChEBI" id="CHEBI:35235"/>
        <dbReference type="ChEBI" id="CHEBI:57972"/>
        <dbReference type="ChEBI" id="CHEBI:64428"/>
        <dbReference type="EC" id="2.8.1.7"/>
    </reaction>
</comment>
<comment type="catalytic activity">
    <reaction evidence="1">
        <text>L-selenocysteine + AH2 = hydrogenselenide + L-alanine + A + H(+)</text>
        <dbReference type="Rhea" id="RHEA:11632"/>
        <dbReference type="ChEBI" id="CHEBI:13193"/>
        <dbReference type="ChEBI" id="CHEBI:15378"/>
        <dbReference type="ChEBI" id="CHEBI:17499"/>
        <dbReference type="ChEBI" id="CHEBI:29317"/>
        <dbReference type="ChEBI" id="CHEBI:57843"/>
        <dbReference type="ChEBI" id="CHEBI:57972"/>
        <dbReference type="EC" id="4.4.1.16"/>
    </reaction>
</comment>
<comment type="cofactor">
    <cofactor evidence="1">
        <name>pyridoxal 5'-phosphate</name>
        <dbReference type="ChEBI" id="CHEBI:597326"/>
    </cofactor>
</comment>
<comment type="pathway">
    <text evidence="1">Cofactor biosynthesis; iron-sulfur cluster biosynthesis.</text>
</comment>
<comment type="subunit">
    <text evidence="1">Homodimer. Interacts with SufE and the SufBCD complex composed of SufB, SufC and SufD. The interaction with SufE is required to mediate the direct transfer of the sulfur atom from the S-sulfanylcysteine.</text>
</comment>
<comment type="subcellular location">
    <subcellularLocation>
        <location evidence="1">Cytoplasm</location>
    </subcellularLocation>
</comment>
<comment type="similarity">
    <text evidence="1">Belongs to the class-V pyridoxal-phosphate-dependent aminotransferase family. Csd subfamily.</text>
</comment>
<feature type="chain" id="PRO_1000188299" description="Cysteine desulfurase">
    <location>
        <begin position="1"/>
        <end position="406"/>
    </location>
</feature>
<feature type="active site" description="Cysteine persulfide intermediate" evidence="1">
    <location>
        <position position="364"/>
    </location>
</feature>
<feature type="modified residue" description="N6-(pyridoxal phosphate)lysine" evidence="1">
    <location>
        <position position="226"/>
    </location>
</feature>
<protein>
    <recommendedName>
        <fullName evidence="1">Cysteine desulfurase</fullName>
        <ecNumber evidence="1">2.8.1.7</ecNumber>
    </recommendedName>
    <alternativeName>
        <fullName evidence="1">Selenocysteine beta-lyase</fullName>
        <shortName evidence="1">SCL</shortName>
    </alternativeName>
    <alternativeName>
        <fullName evidence="1">Selenocysteine lyase</fullName>
        <ecNumber evidence="1">4.4.1.16</ecNumber>
    </alternativeName>
    <alternativeName>
        <fullName evidence="1">Selenocysteine reductase</fullName>
    </alternativeName>
</protein>
<reference key="1">
    <citation type="journal article" date="2009" name="PLoS Genet.">
        <title>Organised genome dynamics in the Escherichia coli species results in highly diverse adaptive paths.</title>
        <authorList>
            <person name="Touchon M."/>
            <person name="Hoede C."/>
            <person name="Tenaillon O."/>
            <person name="Barbe V."/>
            <person name="Baeriswyl S."/>
            <person name="Bidet P."/>
            <person name="Bingen E."/>
            <person name="Bonacorsi S."/>
            <person name="Bouchier C."/>
            <person name="Bouvet O."/>
            <person name="Calteau A."/>
            <person name="Chiapello H."/>
            <person name="Clermont O."/>
            <person name="Cruveiller S."/>
            <person name="Danchin A."/>
            <person name="Diard M."/>
            <person name="Dossat C."/>
            <person name="Karoui M.E."/>
            <person name="Frapy E."/>
            <person name="Garry L."/>
            <person name="Ghigo J.M."/>
            <person name="Gilles A.M."/>
            <person name="Johnson J."/>
            <person name="Le Bouguenec C."/>
            <person name="Lescat M."/>
            <person name="Mangenot S."/>
            <person name="Martinez-Jehanne V."/>
            <person name="Matic I."/>
            <person name="Nassif X."/>
            <person name="Oztas S."/>
            <person name="Petit M.A."/>
            <person name="Pichon C."/>
            <person name="Rouy Z."/>
            <person name="Ruf C.S."/>
            <person name="Schneider D."/>
            <person name="Tourret J."/>
            <person name="Vacherie B."/>
            <person name="Vallenet D."/>
            <person name="Medigue C."/>
            <person name="Rocha E.P.C."/>
            <person name="Denamur E."/>
        </authorList>
    </citation>
    <scope>NUCLEOTIDE SEQUENCE [LARGE SCALE GENOMIC DNA]</scope>
    <source>
        <strain>UMN026 / ExPEC</strain>
    </source>
</reference>
<keyword id="KW-0963">Cytoplasm</keyword>
<keyword id="KW-0456">Lyase</keyword>
<keyword id="KW-0663">Pyridoxal phosphate</keyword>
<keyword id="KW-0808">Transferase</keyword>
<dbReference type="EC" id="2.8.1.7" evidence="1"/>
<dbReference type="EC" id="4.4.1.16" evidence="1"/>
<dbReference type="EMBL" id="CU928163">
    <property type="protein sequence ID" value="CAR13165.1"/>
    <property type="molecule type" value="Genomic_DNA"/>
</dbReference>
<dbReference type="RefSeq" id="WP_000144587.1">
    <property type="nucleotide sequence ID" value="NC_011751.1"/>
</dbReference>
<dbReference type="RefSeq" id="YP_002412697.1">
    <property type="nucleotide sequence ID" value="NC_011751.1"/>
</dbReference>
<dbReference type="SMR" id="B7N516"/>
<dbReference type="STRING" id="585056.ECUMN_1969"/>
<dbReference type="KEGG" id="eum:ECUMN_1969"/>
<dbReference type="PATRIC" id="fig|585056.7.peg.2155"/>
<dbReference type="HOGENOM" id="CLU_003433_2_5_6"/>
<dbReference type="UniPathway" id="UPA00266"/>
<dbReference type="Proteomes" id="UP000007097">
    <property type="component" value="Chromosome"/>
</dbReference>
<dbReference type="GO" id="GO:0005737">
    <property type="term" value="C:cytoplasm"/>
    <property type="evidence" value="ECO:0007669"/>
    <property type="project" value="UniProtKB-SubCell"/>
</dbReference>
<dbReference type="GO" id="GO:0031071">
    <property type="term" value="F:cysteine desulfurase activity"/>
    <property type="evidence" value="ECO:0007669"/>
    <property type="project" value="UniProtKB-UniRule"/>
</dbReference>
<dbReference type="GO" id="GO:0030170">
    <property type="term" value="F:pyridoxal phosphate binding"/>
    <property type="evidence" value="ECO:0007669"/>
    <property type="project" value="InterPro"/>
</dbReference>
<dbReference type="GO" id="GO:0009000">
    <property type="term" value="F:selenocysteine lyase activity"/>
    <property type="evidence" value="ECO:0007669"/>
    <property type="project" value="UniProtKB-UniRule"/>
</dbReference>
<dbReference type="GO" id="GO:0006534">
    <property type="term" value="P:cysteine metabolic process"/>
    <property type="evidence" value="ECO:0007669"/>
    <property type="project" value="InterPro"/>
</dbReference>
<dbReference type="CDD" id="cd06453">
    <property type="entry name" value="SufS_like"/>
    <property type="match status" value="1"/>
</dbReference>
<dbReference type="FunFam" id="3.40.640.10:FF:000042">
    <property type="entry name" value="Cysteine desulfurase"/>
    <property type="match status" value="1"/>
</dbReference>
<dbReference type="Gene3D" id="3.90.1150.10">
    <property type="entry name" value="Aspartate Aminotransferase, domain 1"/>
    <property type="match status" value="1"/>
</dbReference>
<dbReference type="Gene3D" id="3.40.640.10">
    <property type="entry name" value="Type I PLP-dependent aspartate aminotransferase-like (Major domain)"/>
    <property type="match status" value="1"/>
</dbReference>
<dbReference type="HAMAP" id="MF_01831">
    <property type="entry name" value="SufS_aminotrans_5"/>
    <property type="match status" value="1"/>
</dbReference>
<dbReference type="InterPro" id="IPR000192">
    <property type="entry name" value="Aminotrans_V_dom"/>
</dbReference>
<dbReference type="InterPro" id="IPR020578">
    <property type="entry name" value="Aminotrans_V_PyrdxlP_BS"/>
</dbReference>
<dbReference type="InterPro" id="IPR010970">
    <property type="entry name" value="Cys_dSase_SufS"/>
</dbReference>
<dbReference type="InterPro" id="IPR015424">
    <property type="entry name" value="PyrdxlP-dep_Trfase"/>
</dbReference>
<dbReference type="InterPro" id="IPR015421">
    <property type="entry name" value="PyrdxlP-dep_Trfase_major"/>
</dbReference>
<dbReference type="InterPro" id="IPR015422">
    <property type="entry name" value="PyrdxlP-dep_Trfase_small"/>
</dbReference>
<dbReference type="NCBIfam" id="NF006791">
    <property type="entry name" value="PRK09295.1"/>
    <property type="match status" value="1"/>
</dbReference>
<dbReference type="NCBIfam" id="TIGR01979">
    <property type="entry name" value="sufS"/>
    <property type="match status" value="1"/>
</dbReference>
<dbReference type="PANTHER" id="PTHR43586">
    <property type="entry name" value="CYSTEINE DESULFURASE"/>
    <property type="match status" value="1"/>
</dbReference>
<dbReference type="PANTHER" id="PTHR43586:SF25">
    <property type="entry name" value="CYSTEINE DESULFURASE"/>
    <property type="match status" value="1"/>
</dbReference>
<dbReference type="Pfam" id="PF00266">
    <property type="entry name" value="Aminotran_5"/>
    <property type="match status" value="1"/>
</dbReference>
<dbReference type="SUPFAM" id="SSF53383">
    <property type="entry name" value="PLP-dependent transferases"/>
    <property type="match status" value="1"/>
</dbReference>
<dbReference type="PROSITE" id="PS00595">
    <property type="entry name" value="AA_TRANSFER_CLASS_5"/>
    <property type="match status" value="1"/>
</dbReference>
<gene>
    <name evidence="1" type="primary">sufS</name>
    <name type="ordered locus">ECUMN_1969</name>
</gene>
<sequence>MTFSVDKVRADFPVLSREVNGLPLAYLDSAASAQKPSQVIDAEAEFYRHGYAAVHRGIHTLSAQATEKMENVRKRASLFINARSAEELVFVRGTTEGINLVANSWGNSNVRAGDNIIISQMEHHANIVPWQMLCARVGAELRVIPLNPDGTLQLETLPTLFDEKTRLLAITHVSNVLGTENPLAEMITLAHQHGTKVLVDGAQAVMHHPVDVQALDCDFYVFSGHKLYGPTGIGILYVKEALLQEMPPWEGGGSMIATVSLSEGTTWTKAPWRFEAGTPNTGGIIGLGAALEYVSALGLNNIAEYEQNLMHYALSQLESVPDLTLYGPQNRLGVIAFNLGKHHAYDVGSFLDNYGIAVRTGHHCAMPLMAYYNVPAMCRASLAMYNTHEEVDRLVTGLQRIHRLLG</sequence>